<dbReference type="EMBL" id="AY077838">
    <property type="protein sequence ID" value="AAL77219.1"/>
    <property type="molecule type" value="mRNA"/>
</dbReference>
<dbReference type="EMBL" id="AK292043">
    <property type="protein sequence ID" value="BAF84732.1"/>
    <property type="molecule type" value="mRNA"/>
</dbReference>
<dbReference type="EMBL" id="AL360220">
    <property type="status" value="NOT_ANNOTATED_CDS"/>
    <property type="molecule type" value="Genomic_DNA"/>
</dbReference>
<dbReference type="EMBL" id="AL355347">
    <property type="status" value="NOT_ANNOTATED_CDS"/>
    <property type="molecule type" value="Genomic_DNA"/>
</dbReference>
<dbReference type="EMBL" id="AL391644">
    <property type="status" value="NOT_ANNOTATED_CDS"/>
    <property type="molecule type" value="Genomic_DNA"/>
</dbReference>
<dbReference type="EMBL" id="AL138882">
    <property type="status" value="NOT_ANNOTATED_CDS"/>
    <property type="molecule type" value="Genomic_DNA"/>
</dbReference>
<dbReference type="EMBL" id="AL049544">
    <property type="status" value="NOT_ANNOTATED_CDS"/>
    <property type="molecule type" value="Genomic_DNA"/>
</dbReference>
<dbReference type="EMBL" id="Z93021">
    <property type="status" value="NOT_ANNOTATED_CDS"/>
    <property type="molecule type" value="Genomic_DNA"/>
</dbReference>
<dbReference type="EMBL" id="CH471143">
    <property type="protein sequence ID" value="EAW88490.1"/>
    <property type="molecule type" value="Genomic_DNA"/>
</dbReference>
<dbReference type="EMBL" id="BC034043">
    <property type="protein sequence ID" value="AAH34043.1"/>
    <property type="molecule type" value="mRNA"/>
</dbReference>
<dbReference type="CCDS" id="CCDS4963.1"/>
<dbReference type="RefSeq" id="NP_689901.2">
    <property type="nucleotide sequence ID" value="NM_152688.4"/>
</dbReference>
<dbReference type="SMR" id="Q5VWX1"/>
<dbReference type="BioGRID" id="128436">
    <property type="interactions" value="138"/>
</dbReference>
<dbReference type="FunCoup" id="Q5VWX1">
    <property type="interactions" value="2036"/>
</dbReference>
<dbReference type="IntAct" id="Q5VWX1">
    <property type="interactions" value="78"/>
</dbReference>
<dbReference type="MINT" id="Q5VWX1"/>
<dbReference type="STRING" id="9606.ENSP00000281156"/>
<dbReference type="GlyGen" id="Q5VWX1">
    <property type="glycosylation" value="2 sites, 1 O-linked glycan (1 site)"/>
</dbReference>
<dbReference type="iPTMnet" id="Q5VWX1"/>
<dbReference type="PhosphoSitePlus" id="Q5VWX1"/>
<dbReference type="BioMuta" id="KHDRBS2"/>
<dbReference type="DMDM" id="74762274"/>
<dbReference type="jPOST" id="Q5VWX1"/>
<dbReference type="MassIVE" id="Q5VWX1"/>
<dbReference type="PaxDb" id="9606-ENSP00000281156"/>
<dbReference type="PeptideAtlas" id="Q5VWX1"/>
<dbReference type="ProteomicsDB" id="65566"/>
<dbReference type="Antibodypedia" id="17553">
    <property type="antibodies" value="137 antibodies from 20 providers"/>
</dbReference>
<dbReference type="DNASU" id="202559"/>
<dbReference type="Ensembl" id="ENST00000281156.5">
    <property type="protein sequence ID" value="ENSP00000281156.3"/>
    <property type="gene ID" value="ENSG00000112232.11"/>
</dbReference>
<dbReference type="Ensembl" id="ENST00000718012.1">
    <property type="protein sequence ID" value="ENSP00000520654.1"/>
    <property type="gene ID" value="ENSG00000112232.11"/>
</dbReference>
<dbReference type="GeneID" id="202559"/>
<dbReference type="KEGG" id="hsa:202559"/>
<dbReference type="MANE-Select" id="ENST00000281156.5">
    <property type="protein sequence ID" value="ENSP00000281156.3"/>
    <property type="RefSeq nucleotide sequence ID" value="NM_152688.4"/>
    <property type="RefSeq protein sequence ID" value="NP_689901.2"/>
</dbReference>
<dbReference type="UCSC" id="uc003peg.3">
    <property type="organism name" value="human"/>
</dbReference>
<dbReference type="AGR" id="HGNC:18114"/>
<dbReference type="CTD" id="202559"/>
<dbReference type="DisGeNET" id="202559"/>
<dbReference type="GeneCards" id="KHDRBS2"/>
<dbReference type="HGNC" id="HGNC:18114">
    <property type="gene designation" value="KHDRBS2"/>
</dbReference>
<dbReference type="HPA" id="ENSG00000112232">
    <property type="expression patterns" value="Tissue enhanced (brain, retina, thyroid gland)"/>
</dbReference>
<dbReference type="MIM" id="610487">
    <property type="type" value="gene"/>
</dbReference>
<dbReference type="neXtProt" id="NX_Q5VWX1"/>
<dbReference type="OpenTargets" id="ENSG00000112232"/>
<dbReference type="PharmGKB" id="PA30093"/>
<dbReference type="VEuPathDB" id="HostDB:ENSG00000112232"/>
<dbReference type="eggNOG" id="KOG1588">
    <property type="taxonomic scope" value="Eukaryota"/>
</dbReference>
<dbReference type="GeneTree" id="ENSGT00940000157134"/>
<dbReference type="HOGENOM" id="CLU_034976_0_1_1"/>
<dbReference type="InParanoid" id="Q5VWX1"/>
<dbReference type="OMA" id="YGHGVNE"/>
<dbReference type="OrthoDB" id="6777263at2759"/>
<dbReference type="PAN-GO" id="Q5VWX1">
    <property type="GO annotations" value="4 GO annotations based on evolutionary models"/>
</dbReference>
<dbReference type="PhylomeDB" id="Q5VWX1"/>
<dbReference type="TreeFam" id="TF314878"/>
<dbReference type="PathwayCommons" id="Q5VWX1"/>
<dbReference type="Reactome" id="R-HSA-8849468">
    <property type="pathway name" value="PTK6 Regulates Proteins Involved in RNA Processing"/>
</dbReference>
<dbReference type="SignaLink" id="Q5VWX1"/>
<dbReference type="BioGRID-ORCS" id="202559">
    <property type="hits" value="11 hits in 1150 CRISPR screens"/>
</dbReference>
<dbReference type="CD-CODE" id="62EA6512">
    <property type="entry name" value="Sam68 nuclear body"/>
</dbReference>
<dbReference type="CD-CODE" id="91857CE7">
    <property type="entry name" value="Nucleolus"/>
</dbReference>
<dbReference type="ChiTaRS" id="KHDRBS2">
    <property type="organism name" value="human"/>
</dbReference>
<dbReference type="GenomeRNAi" id="202559"/>
<dbReference type="Pharos" id="Q5VWX1">
    <property type="development level" value="Tbio"/>
</dbReference>
<dbReference type="PRO" id="PR:Q5VWX1"/>
<dbReference type="Proteomes" id="UP000005640">
    <property type="component" value="Chromosome 6"/>
</dbReference>
<dbReference type="RNAct" id="Q5VWX1">
    <property type="molecule type" value="protein"/>
</dbReference>
<dbReference type="Bgee" id="ENSG00000112232">
    <property type="expression patterns" value="Expressed in cortical plate and 83 other cell types or tissues"/>
</dbReference>
<dbReference type="ExpressionAtlas" id="Q5VWX1">
    <property type="expression patterns" value="baseline and differential"/>
</dbReference>
<dbReference type="GO" id="GO:0005654">
    <property type="term" value="C:nucleoplasm"/>
    <property type="evidence" value="ECO:0000304"/>
    <property type="project" value="Reactome"/>
</dbReference>
<dbReference type="GO" id="GO:0005634">
    <property type="term" value="C:nucleus"/>
    <property type="evidence" value="ECO:0000318"/>
    <property type="project" value="GO_Central"/>
</dbReference>
<dbReference type="GO" id="GO:0003729">
    <property type="term" value="F:mRNA binding"/>
    <property type="evidence" value="ECO:0000318"/>
    <property type="project" value="GO_Central"/>
</dbReference>
<dbReference type="GO" id="GO:0008143">
    <property type="term" value="F:poly(A) binding"/>
    <property type="evidence" value="ECO:0000318"/>
    <property type="project" value="GO_Central"/>
</dbReference>
<dbReference type="GO" id="GO:0008266">
    <property type="term" value="F:poly(U) RNA binding"/>
    <property type="evidence" value="ECO:0007669"/>
    <property type="project" value="Ensembl"/>
</dbReference>
<dbReference type="GO" id="GO:0042169">
    <property type="term" value="F:SH2 domain binding"/>
    <property type="evidence" value="ECO:0007669"/>
    <property type="project" value="Ensembl"/>
</dbReference>
<dbReference type="GO" id="GO:0017124">
    <property type="term" value="F:SH3 domain binding"/>
    <property type="evidence" value="ECO:0007669"/>
    <property type="project" value="UniProtKB-KW"/>
</dbReference>
<dbReference type="GO" id="GO:0006397">
    <property type="term" value="P:mRNA processing"/>
    <property type="evidence" value="ECO:0007669"/>
    <property type="project" value="UniProtKB-KW"/>
</dbReference>
<dbReference type="GO" id="GO:0000381">
    <property type="term" value="P:regulation of alternative mRNA splicing, via spliceosome"/>
    <property type="evidence" value="ECO:0000318"/>
    <property type="project" value="GO_Central"/>
</dbReference>
<dbReference type="CDD" id="cd22469">
    <property type="entry name" value="KH-I_KHDRBS2"/>
    <property type="match status" value="1"/>
</dbReference>
<dbReference type="FunFam" id="3.30.1370.10:FF:000030">
    <property type="entry name" value="KH domain-containing, RNA-binding, signal transduction-associated protein 3 isoformX2"/>
    <property type="match status" value="1"/>
</dbReference>
<dbReference type="Gene3D" id="3.30.1370.10">
    <property type="entry name" value="K Homology domain, type 1"/>
    <property type="match status" value="1"/>
</dbReference>
<dbReference type="InterPro" id="IPR045071">
    <property type="entry name" value="BBP-like"/>
</dbReference>
<dbReference type="InterPro" id="IPR055256">
    <property type="entry name" value="KH_1_KHDC4/BBP-like"/>
</dbReference>
<dbReference type="InterPro" id="IPR004087">
    <property type="entry name" value="KH_dom"/>
</dbReference>
<dbReference type="InterPro" id="IPR036612">
    <property type="entry name" value="KH_dom_type_1_sf"/>
</dbReference>
<dbReference type="InterPro" id="IPR032571">
    <property type="entry name" value="Qua1_dom"/>
</dbReference>
<dbReference type="InterPro" id="IPR032335">
    <property type="entry name" value="Sam68-YY"/>
</dbReference>
<dbReference type="PANTHER" id="PTHR11208:SF34">
    <property type="entry name" value="KH DOMAIN-CONTAINING, RNA-BINDING, SIGNAL TRANSDUCTION-ASSOCIATED PROTEIN 2"/>
    <property type="match status" value="1"/>
</dbReference>
<dbReference type="PANTHER" id="PTHR11208">
    <property type="entry name" value="RNA-BINDING PROTEIN RELATED"/>
    <property type="match status" value="1"/>
</dbReference>
<dbReference type="Pfam" id="PF22675">
    <property type="entry name" value="KH-I_KHDC4-BBP"/>
    <property type="match status" value="1"/>
</dbReference>
<dbReference type="Pfam" id="PF16274">
    <property type="entry name" value="Qua1"/>
    <property type="match status" value="1"/>
</dbReference>
<dbReference type="Pfam" id="PF16568">
    <property type="entry name" value="Sam68-YY"/>
    <property type="match status" value="1"/>
</dbReference>
<dbReference type="SMART" id="SM00322">
    <property type="entry name" value="KH"/>
    <property type="match status" value="1"/>
</dbReference>
<dbReference type="SUPFAM" id="SSF54791">
    <property type="entry name" value="Eukaryotic type KH-domain (KH-domain type I)"/>
    <property type="match status" value="1"/>
</dbReference>
<dbReference type="PROSITE" id="PS50084">
    <property type="entry name" value="KH_TYPE_1"/>
    <property type="match status" value="1"/>
</dbReference>
<protein>
    <recommendedName>
        <fullName>KH domain-containing, RNA-binding, signal transduction-associated protein 2</fullName>
    </recommendedName>
    <alternativeName>
        <fullName>Sam68-like mammalian protein 1</fullName>
        <shortName>SLM-1</shortName>
        <shortName>hSLM-1</shortName>
    </alternativeName>
</protein>
<accession>Q5VWX1</accession>
<accession>A8K7M8</accession>
<accession>Q8N4I4</accession>
<accession>Q8TCZ4</accession>
<reference key="1">
    <citation type="journal article" date="2002" name="Mol. Biol. Rep.">
        <title>Cloning and characterization of a novel human STAR domain containing cDNA KHDRBS2.</title>
        <authorList>
            <person name="Wang L."/>
            <person name="Xu J."/>
            <person name="Zeng L."/>
            <person name="Ye X."/>
            <person name="Wu Q."/>
            <person name="Dai J."/>
            <person name="Ji C."/>
            <person name="Gu S."/>
            <person name="Zhao C."/>
            <person name="Xie Y."/>
            <person name="Mao Y."/>
        </authorList>
    </citation>
    <scope>NUCLEOTIDE SEQUENCE [MRNA]</scope>
    <scope>TISSUE SPECIFICITY</scope>
    <source>
        <tissue>Fetal brain</tissue>
    </source>
</reference>
<reference key="2">
    <citation type="journal article" date="2004" name="Nat. Genet.">
        <title>Complete sequencing and characterization of 21,243 full-length human cDNAs.</title>
        <authorList>
            <person name="Ota T."/>
            <person name="Suzuki Y."/>
            <person name="Nishikawa T."/>
            <person name="Otsuki T."/>
            <person name="Sugiyama T."/>
            <person name="Irie R."/>
            <person name="Wakamatsu A."/>
            <person name="Hayashi K."/>
            <person name="Sato H."/>
            <person name="Nagai K."/>
            <person name="Kimura K."/>
            <person name="Makita H."/>
            <person name="Sekine M."/>
            <person name="Obayashi M."/>
            <person name="Nishi T."/>
            <person name="Shibahara T."/>
            <person name="Tanaka T."/>
            <person name="Ishii S."/>
            <person name="Yamamoto J."/>
            <person name="Saito K."/>
            <person name="Kawai Y."/>
            <person name="Isono Y."/>
            <person name="Nakamura Y."/>
            <person name="Nagahari K."/>
            <person name="Murakami K."/>
            <person name="Yasuda T."/>
            <person name="Iwayanagi T."/>
            <person name="Wagatsuma M."/>
            <person name="Shiratori A."/>
            <person name="Sudo H."/>
            <person name="Hosoiri T."/>
            <person name="Kaku Y."/>
            <person name="Kodaira H."/>
            <person name="Kondo H."/>
            <person name="Sugawara M."/>
            <person name="Takahashi M."/>
            <person name="Kanda K."/>
            <person name="Yokoi T."/>
            <person name="Furuya T."/>
            <person name="Kikkawa E."/>
            <person name="Omura Y."/>
            <person name="Abe K."/>
            <person name="Kamihara K."/>
            <person name="Katsuta N."/>
            <person name="Sato K."/>
            <person name="Tanikawa M."/>
            <person name="Yamazaki M."/>
            <person name="Ninomiya K."/>
            <person name="Ishibashi T."/>
            <person name="Yamashita H."/>
            <person name="Murakawa K."/>
            <person name="Fujimori K."/>
            <person name="Tanai H."/>
            <person name="Kimata M."/>
            <person name="Watanabe M."/>
            <person name="Hiraoka S."/>
            <person name="Chiba Y."/>
            <person name="Ishida S."/>
            <person name="Ono Y."/>
            <person name="Takiguchi S."/>
            <person name="Watanabe S."/>
            <person name="Yosida M."/>
            <person name="Hotuta T."/>
            <person name="Kusano J."/>
            <person name="Kanehori K."/>
            <person name="Takahashi-Fujii A."/>
            <person name="Hara H."/>
            <person name="Tanase T.-O."/>
            <person name="Nomura Y."/>
            <person name="Togiya S."/>
            <person name="Komai F."/>
            <person name="Hara R."/>
            <person name="Takeuchi K."/>
            <person name="Arita M."/>
            <person name="Imose N."/>
            <person name="Musashino K."/>
            <person name="Yuuki H."/>
            <person name="Oshima A."/>
            <person name="Sasaki N."/>
            <person name="Aotsuka S."/>
            <person name="Yoshikawa Y."/>
            <person name="Matsunawa H."/>
            <person name="Ichihara T."/>
            <person name="Shiohata N."/>
            <person name="Sano S."/>
            <person name="Moriya S."/>
            <person name="Momiyama H."/>
            <person name="Satoh N."/>
            <person name="Takami S."/>
            <person name="Terashima Y."/>
            <person name="Suzuki O."/>
            <person name="Nakagawa S."/>
            <person name="Senoh A."/>
            <person name="Mizoguchi H."/>
            <person name="Goto Y."/>
            <person name="Shimizu F."/>
            <person name="Wakebe H."/>
            <person name="Hishigaki H."/>
            <person name="Watanabe T."/>
            <person name="Sugiyama A."/>
            <person name="Takemoto M."/>
            <person name="Kawakami B."/>
            <person name="Yamazaki M."/>
            <person name="Watanabe K."/>
            <person name="Kumagai A."/>
            <person name="Itakura S."/>
            <person name="Fukuzumi Y."/>
            <person name="Fujimori Y."/>
            <person name="Komiyama M."/>
            <person name="Tashiro H."/>
            <person name="Tanigami A."/>
            <person name="Fujiwara T."/>
            <person name="Ono T."/>
            <person name="Yamada K."/>
            <person name="Fujii Y."/>
            <person name="Ozaki K."/>
            <person name="Hirao M."/>
            <person name="Ohmori Y."/>
            <person name="Kawabata A."/>
            <person name="Hikiji T."/>
            <person name="Kobatake N."/>
            <person name="Inagaki H."/>
            <person name="Ikema Y."/>
            <person name="Okamoto S."/>
            <person name="Okitani R."/>
            <person name="Kawakami T."/>
            <person name="Noguchi S."/>
            <person name="Itoh T."/>
            <person name="Shigeta K."/>
            <person name="Senba T."/>
            <person name="Matsumura K."/>
            <person name="Nakajima Y."/>
            <person name="Mizuno T."/>
            <person name="Morinaga M."/>
            <person name="Sasaki M."/>
            <person name="Togashi T."/>
            <person name="Oyama M."/>
            <person name="Hata H."/>
            <person name="Watanabe M."/>
            <person name="Komatsu T."/>
            <person name="Mizushima-Sugano J."/>
            <person name="Satoh T."/>
            <person name="Shirai Y."/>
            <person name="Takahashi Y."/>
            <person name="Nakagawa K."/>
            <person name="Okumura K."/>
            <person name="Nagase T."/>
            <person name="Nomura N."/>
            <person name="Kikuchi H."/>
            <person name="Masuho Y."/>
            <person name="Yamashita R."/>
            <person name="Nakai K."/>
            <person name="Yada T."/>
            <person name="Nakamura Y."/>
            <person name="Ohara O."/>
            <person name="Isogai T."/>
            <person name="Sugano S."/>
        </authorList>
    </citation>
    <scope>NUCLEOTIDE SEQUENCE [LARGE SCALE MRNA]</scope>
    <source>
        <tissue>Spleen</tissue>
    </source>
</reference>
<reference key="3">
    <citation type="journal article" date="2003" name="Nature">
        <title>The DNA sequence and analysis of human chromosome 6.</title>
        <authorList>
            <person name="Mungall A.J."/>
            <person name="Palmer S.A."/>
            <person name="Sims S.K."/>
            <person name="Edwards C.A."/>
            <person name="Ashurst J.L."/>
            <person name="Wilming L."/>
            <person name="Jones M.C."/>
            <person name="Horton R."/>
            <person name="Hunt S.E."/>
            <person name="Scott C.E."/>
            <person name="Gilbert J.G.R."/>
            <person name="Clamp M.E."/>
            <person name="Bethel G."/>
            <person name="Milne S."/>
            <person name="Ainscough R."/>
            <person name="Almeida J.P."/>
            <person name="Ambrose K.D."/>
            <person name="Andrews T.D."/>
            <person name="Ashwell R.I.S."/>
            <person name="Babbage A.K."/>
            <person name="Bagguley C.L."/>
            <person name="Bailey J."/>
            <person name="Banerjee R."/>
            <person name="Barker D.J."/>
            <person name="Barlow K.F."/>
            <person name="Bates K."/>
            <person name="Beare D.M."/>
            <person name="Beasley H."/>
            <person name="Beasley O."/>
            <person name="Bird C.P."/>
            <person name="Blakey S.E."/>
            <person name="Bray-Allen S."/>
            <person name="Brook J."/>
            <person name="Brown A.J."/>
            <person name="Brown J.Y."/>
            <person name="Burford D.C."/>
            <person name="Burrill W."/>
            <person name="Burton J."/>
            <person name="Carder C."/>
            <person name="Carter N.P."/>
            <person name="Chapman J.C."/>
            <person name="Clark S.Y."/>
            <person name="Clark G."/>
            <person name="Clee C.M."/>
            <person name="Clegg S."/>
            <person name="Cobley V."/>
            <person name="Collier R.E."/>
            <person name="Collins J.E."/>
            <person name="Colman L.K."/>
            <person name="Corby N.R."/>
            <person name="Coville G.J."/>
            <person name="Culley K.M."/>
            <person name="Dhami P."/>
            <person name="Davies J."/>
            <person name="Dunn M."/>
            <person name="Earthrowl M.E."/>
            <person name="Ellington A.E."/>
            <person name="Evans K.A."/>
            <person name="Faulkner L."/>
            <person name="Francis M.D."/>
            <person name="Frankish A."/>
            <person name="Frankland J."/>
            <person name="French L."/>
            <person name="Garner P."/>
            <person name="Garnett J."/>
            <person name="Ghori M.J."/>
            <person name="Gilby L.M."/>
            <person name="Gillson C.J."/>
            <person name="Glithero R.J."/>
            <person name="Grafham D.V."/>
            <person name="Grant M."/>
            <person name="Gribble S."/>
            <person name="Griffiths C."/>
            <person name="Griffiths M.N.D."/>
            <person name="Hall R."/>
            <person name="Halls K.S."/>
            <person name="Hammond S."/>
            <person name="Harley J.L."/>
            <person name="Hart E.A."/>
            <person name="Heath P.D."/>
            <person name="Heathcott R."/>
            <person name="Holmes S.J."/>
            <person name="Howden P.J."/>
            <person name="Howe K.L."/>
            <person name="Howell G.R."/>
            <person name="Huckle E."/>
            <person name="Humphray S.J."/>
            <person name="Humphries M.D."/>
            <person name="Hunt A.R."/>
            <person name="Johnson C.M."/>
            <person name="Joy A.A."/>
            <person name="Kay M."/>
            <person name="Keenan S.J."/>
            <person name="Kimberley A.M."/>
            <person name="King A."/>
            <person name="Laird G.K."/>
            <person name="Langford C."/>
            <person name="Lawlor S."/>
            <person name="Leongamornlert D.A."/>
            <person name="Leversha M."/>
            <person name="Lloyd C.R."/>
            <person name="Lloyd D.M."/>
            <person name="Loveland J.E."/>
            <person name="Lovell J."/>
            <person name="Martin S."/>
            <person name="Mashreghi-Mohammadi M."/>
            <person name="Maslen G.L."/>
            <person name="Matthews L."/>
            <person name="McCann O.T."/>
            <person name="McLaren S.J."/>
            <person name="McLay K."/>
            <person name="McMurray A."/>
            <person name="Moore M.J.F."/>
            <person name="Mullikin J.C."/>
            <person name="Niblett D."/>
            <person name="Nickerson T."/>
            <person name="Novik K.L."/>
            <person name="Oliver K."/>
            <person name="Overton-Larty E.K."/>
            <person name="Parker A."/>
            <person name="Patel R."/>
            <person name="Pearce A.V."/>
            <person name="Peck A.I."/>
            <person name="Phillimore B.J.C.T."/>
            <person name="Phillips S."/>
            <person name="Plumb R.W."/>
            <person name="Porter K.M."/>
            <person name="Ramsey Y."/>
            <person name="Ranby S.A."/>
            <person name="Rice C.M."/>
            <person name="Ross M.T."/>
            <person name="Searle S.M."/>
            <person name="Sehra H.K."/>
            <person name="Sheridan E."/>
            <person name="Skuce C.D."/>
            <person name="Smith S."/>
            <person name="Smith M."/>
            <person name="Spraggon L."/>
            <person name="Squares S.L."/>
            <person name="Steward C.A."/>
            <person name="Sycamore N."/>
            <person name="Tamlyn-Hall G."/>
            <person name="Tester J."/>
            <person name="Theaker A.J."/>
            <person name="Thomas D.W."/>
            <person name="Thorpe A."/>
            <person name="Tracey A."/>
            <person name="Tromans A."/>
            <person name="Tubby B."/>
            <person name="Wall M."/>
            <person name="Wallis J.M."/>
            <person name="West A.P."/>
            <person name="White S.S."/>
            <person name="Whitehead S.L."/>
            <person name="Whittaker H."/>
            <person name="Wild A."/>
            <person name="Willey D.J."/>
            <person name="Wilmer T.E."/>
            <person name="Wood J.M."/>
            <person name="Wray P.W."/>
            <person name="Wyatt J.C."/>
            <person name="Young L."/>
            <person name="Younger R.M."/>
            <person name="Bentley D.R."/>
            <person name="Coulson A."/>
            <person name="Durbin R.M."/>
            <person name="Hubbard T."/>
            <person name="Sulston J.E."/>
            <person name="Dunham I."/>
            <person name="Rogers J."/>
            <person name="Beck S."/>
        </authorList>
    </citation>
    <scope>NUCLEOTIDE SEQUENCE [LARGE SCALE GENOMIC DNA]</scope>
</reference>
<reference key="4">
    <citation type="submission" date="2005-07" db="EMBL/GenBank/DDBJ databases">
        <authorList>
            <person name="Mural R.J."/>
            <person name="Istrail S."/>
            <person name="Sutton G.G."/>
            <person name="Florea L."/>
            <person name="Halpern A.L."/>
            <person name="Mobarry C.M."/>
            <person name="Lippert R."/>
            <person name="Walenz B."/>
            <person name="Shatkay H."/>
            <person name="Dew I."/>
            <person name="Miller J.R."/>
            <person name="Flanigan M.J."/>
            <person name="Edwards N.J."/>
            <person name="Bolanos R."/>
            <person name="Fasulo D."/>
            <person name="Halldorsson B.V."/>
            <person name="Hannenhalli S."/>
            <person name="Turner R."/>
            <person name="Yooseph S."/>
            <person name="Lu F."/>
            <person name="Nusskern D.R."/>
            <person name="Shue B.C."/>
            <person name="Zheng X.H."/>
            <person name="Zhong F."/>
            <person name="Delcher A.L."/>
            <person name="Huson D.H."/>
            <person name="Kravitz S.A."/>
            <person name="Mouchard L."/>
            <person name="Reinert K."/>
            <person name="Remington K.A."/>
            <person name="Clark A.G."/>
            <person name="Waterman M.S."/>
            <person name="Eichler E.E."/>
            <person name="Adams M.D."/>
            <person name="Hunkapiller M.W."/>
            <person name="Myers E.W."/>
            <person name="Venter J.C."/>
        </authorList>
    </citation>
    <scope>NUCLEOTIDE SEQUENCE [LARGE SCALE GENOMIC DNA]</scope>
</reference>
<reference key="5">
    <citation type="journal article" date="2004" name="Genome Res.">
        <title>The status, quality, and expansion of the NIH full-length cDNA project: the Mammalian Gene Collection (MGC).</title>
        <authorList>
            <consortium name="The MGC Project Team"/>
        </authorList>
    </citation>
    <scope>NUCLEOTIDE SEQUENCE [LARGE SCALE MRNA]</scope>
    <source>
        <tissue>Brain</tissue>
    </source>
</reference>
<reference key="6">
    <citation type="journal article" date="2003" name="Mol. Biol. Cell">
        <title>Sam68 RNA binding protein is an in vivo substrate for protein arginine N-methyltransferase 1.</title>
        <authorList>
            <person name="Cote J."/>
            <person name="Boisvert F.-M."/>
            <person name="Boulanger M.-C."/>
            <person name="Bedford M.T."/>
            <person name="Richard S."/>
        </authorList>
    </citation>
    <scope>METHYLATION</scope>
</reference>
<reference key="7">
    <citation type="journal article" date="2009" name="J. Biol. Chem.">
        <title>Heterogeneous nuclear ribonucleoprotein G regulates splice site selection by binding to CC(A/C)-rich regions in pre-mRNA.</title>
        <authorList>
            <person name="Heinrich B."/>
            <person name="Zhang Z."/>
            <person name="Raitskin O."/>
            <person name="Hiller M."/>
            <person name="Benderska N."/>
            <person name="Hartmann A.M."/>
            <person name="Bracco L."/>
            <person name="Elliott D."/>
            <person name="Ben-Ari S."/>
            <person name="Soreq H."/>
            <person name="Sperling J."/>
            <person name="Sperling R."/>
            <person name="Stamm S."/>
        </authorList>
    </citation>
    <scope>INTERACTION WITH RBMX</scope>
</reference>
<feature type="chain" id="PRO_0000308953" description="KH domain-containing, RNA-binding, signal transduction-associated protein 2">
    <location>
        <begin position="1"/>
        <end position="349"/>
    </location>
</feature>
<feature type="domain" description="KH" evidence="3">
    <location>
        <begin position="65"/>
        <end position="135"/>
    </location>
</feature>
<feature type="region of interest" description="Disordered" evidence="4">
    <location>
        <begin position="182"/>
        <end position="284"/>
    </location>
</feature>
<feature type="region of interest" description="Disordered" evidence="4">
    <location>
        <begin position="319"/>
        <end position="349"/>
    </location>
</feature>
<feature type="compositionally biased region" description="Basic and acidic residues" evidence="4">
    <location>
        <begin position="340"/>
        <end position="349"/>
    </location>
</feature>
<feature type="modified residue" description="Omega-N-methylarginine" evidence="2">
    <location>
        <position position="230"/>
    </location>
</feature>
<feature type="modified residue" description="Omega-N-methylarginine" evidence="2">
    <location>
        <position position="240"/>
    </location>
</feature>
<feature type="sequence variant" id="VAR_036885" description="In dbSNP:rs7449840.">
    <original>G</original>
    <variation>A</variation>
    <location>
        <position position="308"/>
    </location>
</feature>
<feature type="sequence conflict" description="In Ref. 1; AAL77219." evidence="8" ref="1">
    <original>L</original>
    <variation>P</variation>
    <location>
        <position position="65"/>
    </location>
</feature>
<feature type="sequence conflict" description="In Ref. 1; AAL77219." evidence="8" ref="1">
    <original>A</original>
    <variation>V</variation>
    <location>
        <position position="232"/>
    </location>
</feature>
<feature type="sequence conflict" description="In Ref. 5; AAH34043." evidence="8" ref="5">
    <original>R</original>
    <variation>S</variation>
    <location>
        <position position="326"/>
    </location>
</feature>
<proteinExistence type="evidence at protein level"/>
<keyword id="KW-0488">Methylation</keyword>
<keyword id="KW-0507">mRNA processing</keyword>
<keyword id="KW-0539">Nucleus</keyword>
<keyword id="KW-0597">Phosphoprotein</keyword>
<keyword id="KW-1267">Proteomics identification</keyword>
<keyword id="KW-1185">Reference proteome</keyword>
<keyword id="KW-0694">RNA-binding</keyword>
<keyword id="KW-0729">SH3-binding</keyword>
<keyword id="KW-0804">Transcription</keyword>
<keyword id="KW-0805">Transcription regulation</keyword>
<comment type="function">
    <text evidence="1 2">RNA-binding protein that plays a role in the regulation of alternative splicing and influences mRNA splice site selection and exon inclusion. Binds both poly(A) and poly(U) homopolymers. Phosphorylation by PTK6 inhibits its RNA-binding ability (By similarity). Induces an increased concentration-dependent incorporation of exon in CD44 pre-mRNA by direct binding to purine-rich exonic enhancer. Can regulate alternative splicing of NRXN1 in the laminin G-like domain 6 containing the evolutionary conserved neurexin alternative spliced segment 4 (AS4) involved in neurexin selective targeting to postsynaptic partners. Regulates cell-type specific alternative splicing of NRXN1 at AS4 and acts synergystically with SAM68 in exon skipping. In contrast acts antagonistically with SAM68 in NRXN3 exon skipping at AS4. Its phosphorylation by FYN inhibits its ability to regulate splice site selection. May function as an adapter protein for Src kinases during mitosis.</text>
</comment>
<comment type="subunit">
    <text evidence="1 2 7">Self-associates to form homooligomers (By similarity). Interacts with KHDRBS1/SAM68; heterooligomer formation of KHDRBS family proteins may modulate RNA substrate specificity (By similarity). Interacts with RBMX (PubMed:19282290). Interacts with SAFB, SFRS9 and YTHDC1. Interacts with FYN and PLCG1 (via SH3 domain). Interacts (phosphorylated) with FYN, GRB2, PLCG1 and RASA1 (via SH2 domain) (By similarity).</text>
</comment>
<comment type="interaction">
    <interactant intactId="EBI-742808">
        <id>Q5VWX1</id>
    </interactant>
    <interactant intactId="EBI-8637627">
        <id>Q8WTP8</id>
        <label>AEN</label>
    </interactant>
    <organismsDiffer>false</organismsDiffer>
    <experiments>3</experiments>
</comment>
<comment type="interaction">
    <interactant intactId="EBI-742808">
        <id>Q5VWX1</id>
    </interactant>
    <interactant intactId="EBI-742750">
        <id>Q8TBE0</id>
        <label>BAHD1</label>
    </interactant>
    <organismsDiffer>false</organismsDiffer>
    <experiments>3</experiments>
</comment>
<comment type="interaction">
    <interactant intactId="EBI-742808">
        <id>Q5VWX1</id>
    </interactant>
    <interactant intactId="EBI-1035195">
        <id>P18075</id>
        <label>BMP7</label>
    </interactant>
    <organismsDiffer>false</organismsDiffer>
    <experiments>3</experiments>
</comment>
<comment type="interaction">
    <interactant intactId="EBI-742808">
        <id>Q5VWX1</id>
    </interactant>
    <interactant intactId="EBI-744545">
        <id>Q8NEC5</id>
        <label>CATSPER1</label>
    </interactant>
    <organismsDiffer>false</organismsDiffer>
    <experiments>6</experiments>
</comment>
<comment type="interaction">
    <interactant intactId="EBI-742808">
        <id>Q5VWX1</id>
    </interactant>
    <interactant intactId="EBI-347794">
        <id>Q9Y3Y2</id>
        <label>CHTOP</label>
    </interactant>
    <organismsDiffer>false</organismsDiffer>
    <experiments>3</experiments>
</comment>
<comment type="interaction">
    <interactant intactId="EBI-742808">
        <id>Q5VWX1</id>
    </interactant>
    <interactant intactId="EBI-11984237">
        <id>Q9Y3Y2-3</id>
        <label>CHTOP</label>
    </interactant>
    <organismsDiffer>false</organismsDiffer>
    <experiments>3</experiments>
</comment>
<comment type="interaction">
    <interactant intactId="EBI-742808">
        <id>Q5VWX1</id>
    </interactant>
    <interactant intactId="EBI-538850">
        <id>Q14011</id>
        <label>CIRBP</label>
    </interactant>
    <organismsDiffer>false</organismsDiffer>
    <experiments>4</experiments>
</comment>
<comment type="interaction">
    <interactant intactId="EBI-742808">
        <id>Q5VWX1</id>
    </interactant>
    <interactant intactId="EBI-741032">
        <id>Q8NE01</id>
        <label>CNNM3</label>
    </interactant>
    <organismsDiffer>false</organismsDiffer>
    <experiments>3</experiments>
</comment>
<comment type="interaction">
    <interactant intactId="EBI-742808">
        <id>Q5VWX1</id>
    </interactant>
    <interactant intactId="EBI-9090939">
        <id>Q5D0E6-2</id>
        <label>DALRD3</label>
    </interactant>
    <organismsDiffer>false</organismsDiffer>
    <experiments>3</experiments>
</comment>
<comment type="interaction">
    <interactant intactId="EBI-742808">
        <id>Q5VWX1</id>
    </interactant>
    <interactant intactId="EBI-448771">
        <id>Q92608</id>
        <label>DOCK2</label>
    </interactant>
    <organismsDiffer>false</organismsDiffer>
    <experiments>6</experiments>
</comment>
<comment type="interaction">
    <interactant intactId="EBI-742808">
        <id>Q5VWX1</id>
    </interactant>
    <interactant intactId="EBI-11961494">
        <id>Q6VB84</id>
        <label>FOXD4L3</label>
    </interactant>
    <organismsDiffer>false</organismsDiffer>
    <experiments>3</experiments>
</comment>
<comment type="interaction">
    <interactant intactId="EBI-742808">
        <id>Q5VWX1</id>
    </interactant>
    <interactant intactId="EBI-719843">
        <id>P02008</id>
        <label>HBZ</label>
    </interactant>
    <organismsDiffer>false</organismsDiffer>
    <experiments>4</experiments>
</comment>
<comment type="interaction">
    <interactant intactId="EBI-742808">
        <id>Q5VWX1</id>
    </interactant>
    <interactant intactId="EBI-747421">
        <id>Q03014</id>
        <label>HHEX</label>
    </interactant>
    <organismsDiffer>false</organismsDiffer>
    <experiments>3</experiments>
</comment>
<comment type="interaction">
    <interactant intactId="EBI-742808">
        <id>Q5VWX1</id>
    </interactant>
    <interactant intactId="EBI-7060731">
        <id>P61978-2</id>
        <label>HNRNPK</label>
    </interactant>
    <organismsDiffer>false</organismsDiffer>
    <experiments>4</experiments>
</comment>
<comment type="interaction">
    <interactant intactId="EBI-742808">
        <id>Q5VWX1</id>
    </interactant>
    <interactant intactId="EBI-713419">
        <id>O43390</id>
        <label>HNRNPR</label>
    </interactant>
    <organismsDiffer>false</organismsDiffer>
    <experiments>3</experiments>
</comment>
<comment type="interaction">
    <interactant intactId="EBI-742808">
        <id>Q5VWX1</id>
    </interactant>
    <interactant intactId="EBI-1364">
        <id>Q07666</id>
        <label>KHDRBS1</label>
    </interactant>
    <organismsDiffer>false</organismsDiffer>
    <experiments>3</experiments>
</comment>
<comment type="interaction">
    <interactant intactId="EBI-742808">
        <id>Q5VWX1</id>
    </interactant>
    <interactant intactId="EBI-722504">
        <id>O75525</id>
        <label>KHDRBS3</label>
    </interactant>
    <organismsDiffer>false</organismsDiffer>
    <experiments>6</experiments>
</comment>
<comment type="interaction">
    <interactant intactId="EBI-742808">
        <id>Q5VWX1</id>
    </interactant>
    <interactant intactId="EBI-12028858">
        <id>Q8IXW0</id>
        <label>LMNTD2</label>
    </interactant>
    <organismsDiffer>false</organismsDiffer>
    <experiments>3</experiments>
</comment>
<comment type="interaction">
    <interactant intactId="EBI-742808">
        <id>Q5VWX1</id>
    </interactant>
    <interactant intactId="EBI-739832">
        <id>Q8TBB1</id>
        <label>LNX1</label>
    </interactant>
    <organismsDiffer>false</organismsDiffer>
    <experiments>3</experiments>
</comment>
<comment type="interaction">
    <interactant intactId="EBI-742808">
        <id>Q5VWX1</id>
    </interactant>
    <interactant intactId="EBI-714236">
        <id>Q13330</id>
        <label>MTA1</label>
    </interactant>
    <organismsDiffer>false</organismsDiffer>
    <experiments>3</experiments>
</comment>
<comment type="interaction">
    <interactant intactId="EBI-742808">
        <id>Q5VWX1</id>
    </interactant>
    <interactant intactId="EBI-2889252">
        <id>Q96AH0</id>
        <label>NABP1</label>
    </interactant>
    <organismsDiffer>false</organismsDiffer>
    <experiments>3</experiments>
</comment>
<comment type="interaction">
    <interactant intactId="EBI-742808">
        <id>Q5VWX1</id>
    </interactant>
    <interactant intactId="EBI-748927">
        <id>Q9NQX5</id>
        <label>NPDC1</label>
    </interactant>
    <organismsDiffer>false</organismsDiffer>
    <experiments>6</experiments>
</comment>
<comment type="interaction">
    <interactant intactId="EBI-742808">
        <id>Q5VWX1</id>
    </interactant>
    <interactant intactId="EBI-1567797">
        <id>Q8WWY3</id>
        <label>PRPF31</label>
    </interactant>
    <organismsDiffer>false</organismsDiffer>
    <experiments>8</experiments>
</comment>
<comment type="interaction">
    <interactant intactId="EBI-742808">
        <id>Q5VWX1</id>
    </interactant>
    <interactant intactId="EBI-2803328">
        <id>P79522</id>
        <label>PRR3</label>
    </interactant>
    <organismsDiffer>false</organismsDiffer>
    <experiments>6</experiments>
</comment>
<comment type="interaction">
    <interactant intactId="EBI-742808">
        <id>Q5VWX1</id>
    </interactant>
    <interactant intactId="EBI-1383632">
        <id>Q13882</id>
        <label>PTK6</label>
    </interactant>
    <organismsDiffer>false</organismsDiffer>
    <experiments>4</experiments>
</comment>
<comment type="interaction">
    <interactant intactId="EBI-742808">
        <id>Q5VWX1</id>
    </interactant>
    <interactant intactId="EBI-721525">
        <id>P98175</id>
        <label>RBM10</label>
    </interactant>
    <organismsDiffer>false</organismsDiffer>
    <experiments>3</experiments>
</comment>
<comment type="interaction">
    <interactant intactId="EBI-742808">
        <id>Q5VWX1</id>
    </interactant>
    <interactant intactId="EBI-954272">
        <id>Q96PK6</id>
        <label>RBM14</label>
    </interactant>
    <organismsDiffer>false</organismsDiffer>
    <experiments>3</experiments>
</comment>
<comment type="interaction">
    <interactant intactId="EBI-742808">
        <id>Q5VWX1</id>
    </interactant>
    <interactant intactId="EBI-2949699">
        <id>P98179</id>
        <label>RBM3</label>
    </interactant>
    <organismsDiffer>false</organismsDiffer>
    <experiments>8</experiments>
</comment>
<comment type="interaction">
    <interactant intactId="EBI-742808">
        <id>Q5VWX1</id>
    </interactant>
    <interactant intactId="EBI-743526">
        <id>P38159</id>
        <label>RBMX</label>
    </interactant>
    <organismsDiffer>false</organismsDiffer>
    <experiments>10</experiments>
</comment>
<comment type="interaction">
    <interactant intactId="EBI-742808">
        <id>Q5VWX1</id>
    </interactant>
    <interactant intactId="EBI-1055010">
        <id>P40938</id>
        <label>RFC3</label>
    </interactant>
    <organismsDiffer>false</organismsDiffer>
    <experiments>3</experiments>
</comment>
<comment type="interaction">
    <interactant intactId="EBI-742808">
        <id>Q5VWX1</id>
    </interactant>
    <interactant intactId="EBI-727004">
        <id>O00560</id>
        <label>SDCBP</label>
    </interactant>
    <organismsDiffer>false</organismsDiffer>
    <experiments>6</experiments>
</comment>
<comment type="interaction">
    <interactant intactId="EBI-742808">
        <id>Q5VWX1</id>
    </interactant>
    <interactant intactId="EBI-717201">
        <id>Q9UQ90</id>
        <label>SPG7</label>
    </interactant>
    <organismsDiffer>false</organismsDiffer>
    <experiments>3</experiments>
</comment>
<comment type="interaction">
    <interactant intactId="EBI-742808">
        <id>Q5VWX1</id>
    </interactant>
    <interactant intactId="EBI-10196922">
        <id>P0DMN0</id>
        <label>SULT1A4</label>
    </interactant>
    <organismsDiffer>false</organismsDiffer>
    <experiments>3</experiments>
</comment>
<comment type="interaction">
    <interactant intactId="EBI-742808">
        <id>Q5VWX1</id>
    </interactant>
    <interactant intactId="EBI-1383454">
        <id>P29597</id>
        <label>TYK2</label>
    </interactant>
    <organismsDiffer>false</organismsDiffer>
    <experiments>7</experiments>
</comment>
<comment type="interaction">
    <interactant intactId="EBI-742808">
        <id>Q5VWX1</id>
    </interactant>
    <interactant intactId="EBI-742060">
        <id>Q8TAI1</id>
        <label>TYMSOS</label>
    </interactant>
    <organismsDiffer>false</organismsDiffer>
    <experiments>3</experiments>
</comment>
<comment type="interaction">
    <interactant intactId="EBI-742808">
        <id>Q5VWX1</id>
    </interactant>
    <interactant intactId="EBI-2849854">
        <id>Q96MU7</id>
        <label>YTHDC1</label>
    </interactant>
    <organismsDiffer>false</organismsDiffer>
    <experiments>6</experiments>
</comment>
<comment type="interaction">
    <interactant intactId="EBI-742808">
        <id>Q5VWX1</id>
    </interactant>
    <interactant intactId="EBI-6448783">
        <id>G3V1X1</id>
        <label>ZFC3H1</label>
    </interactant>
    <organismsDiffer>false</organismsDiffer>
    <experiments>3</experiments>
</comment>
<comment type="interaction">
    <interactant intactId="EBI-742808">
        <id>Q5VWX1</id>
    </interactant>
    <interactant intactId="EBI-10486136">
        <id>Q6ZNH5</id>
        <label>ZNF497</label>
    </interactant>
    <organismsDiffer>false</organismsDiffer>
    <experiments>3</experiments>
</comment>
<comment type="interaction">
    <interactant intactId="EBI-742808">
        <id>Q5VWX1</id>
    </interactant>
    <interactant intactId="EBI-745520">
        <id>Q9P0T4</id>
        <label>ZNF581</label>
    </interactant>
    <organismsDiffer>false</organismsDiffer>
    <experiments>3</experiments>
</comment>
<comment type="interaction">
    <interactant intactId="EBI-742808">
        <id>Q5VWX1</id>
    </interactant>
    <interactant intactId="EBI-16429014">
        <id>A0A0S2Z5X4</id>
        <label>ZNF688</label>
    </interactant>
    <organismsDiffer>false</organismsDiffer>
    <experiments>3</experiments>
</comment>
<comment type="interaction">
    <interactant intactId="EBI-742808">
        <id>Q5VWX1</id>
    </interactant>
    <interactant intactId="EBI-11962574">
        <id>Q96EG3</id>
        <label>ZNF837</label>
    </interactant>
    <organismsDiffer>false</organismsDiffer>
    <experiments>3</experiments>
</comment>
<comment type="subcellular location">
    <subcellularLocation>
        <location evidence="2">Nucleus</location>
    </subcellularLocation>
</comment>
<comment type="tissue specificity">
    <text evidence="6">Highly expressed in brain, lung, kidney and small intestine. Weakly expressed in placenta, liver, spleen, thymus, ovary and colon.</text>
</comment>
<comment type="PTM">
    <text evidence="5">Methylated.</text>
</comment>
<comment type="PTM">
    <text evidence="2">Tyrosine phosphorylated by FYN, PTK6 and SRC. Tyrosine phosphorylated by SRC during mitosis (By similarity).</text>
</comment>
<comment type="similarity">
    <text evidence="8">Belongs to the KHDRBS family.</text>
</comment>
<sequence length="349" mass="38927">MEEEKYLPELMAEKDSLDPSFVHASRLLAEEIEKFQGSDGKKEDEEKKYLDVISNKNIKLSERVLIPVKQYPKFNFVGKLLGPRGNSLKRLQEETGAKMSILGKGSMRDKAKEEELRKSGEAKYAHLSDELHVLIEVFAPPGEAYSRMSHALEEIKKFLVPDYNDEIRQEQLRELSYLNGSEDSGRGRGIRGRGIRIAPTAPSRGRGGAIPPPPPPGRGVLTPRGSTVTRGALPVPPVARGVPTPRARGAPTVPGYRAPPPPAHEAYEEYGYDDGYGGEYDDQTYETYDNSYATQTQSVPEYYDYGHGVSEDAYDSYAPEEWATTRSSLKAPPQRSARGGYREHPYGRY</sequence>
<evidence type="ECO:0000250" key="1">
    <source>
        <dbReference type="UniProtKB" id="Q920F3"/>
    </source>
</evidence>
<evidence type="ECO:0000250" key="2">
    <source>
        <dbReference type="UniProtKB" id="Q9WU01"/>
    </source>
</evidence>
<evidence type="ECO:0000255" key="3">
    <source>
        <dbReference type="PROSITE-ProRule" id="PRU00117"/>
    </source>
</evidence>
<evidence type="ECO:0000256" key="4">
    <source>
        <dbReference type="SAM" id="MobiDB-lite"/>
    </source>
</evidence>
<evidence type="ECO:0000269" key="5">
    <source>
    </source>
</evidence>
<evidence type="ECO:0000269" key="6">
    <source>
    </source>
</evidence>
<evidence type="ECO:0000269" key="7">
    <source>
    </source>
</evidence>
<evidence type="ECO:0000305" key="8"/>
<organism>
    <name type="scientific">Homo sapiens</name>
    <name type="common">Human</name>
    <dbReference type="NCBI Taxonomy" id="9606"/>
    <lineage>
        <taxon>Eukaryota</taxon>
        <taxon>Metazoa</taxon>
        <taxon>Chordata</taxon>
        <taxon>Craniata</taxon>
        <taxon>Vertebrata</taxon>
        <taxon>Euteleostomi</taxon>
        <taxon>Mammalia</taxon>
        <taxon>Eutheria</taxon>
        <taxon>Euarchontoglires</taxon>
        <taxon>Primates</taxon>
        <taxon>Haplorrhini</taxon>
        <taxon>Catarrhini</taxon>
        <taxon>Hominidae</taxon>
        <taxon>Homo</taxon>
    </lineage>
</organism>
<gene>
    <name type="primary">KHDRBS2</name>
    <name type="synonym">SLM1</name>
</gene>
<name>KHDR2_HUMAN</name>